<comment type="function">
    <text evidence="1">This protein is one of the early assembly proteins of the 50S ribosomal subunit, although it is not seen to bind rRNA by itself. It is important during the early stages of 50S assembly.</text>
</comment>
<comment type="subunit">
    <text evidence="1">Part of the 50S ribosomal subunit.</text>
</comment>
<comment type="similarity">
    <text evidence="1">Belongs to the universal ribosomal protein uL13 family.</text>
</comment>
<accession>B5BGQ0</accession>
<name>RL13_SALPK</name>
<dbReference type="EMBL" id="FM200053">
    <property type="protein sequence ID" value="CAR61248.1"/>
    <property type="molecule type" value="Genomic_DNA"/>
</dbReference>
<dbReference type="RefSeq" id="WP_000847559.1">
    <property type="nucleotide sequence ID" value="NC_011147.1"/>
</dbReference>
<dbReference type="SMR" id="B5BGQ0"/>
<dbReference type="GeneID" id="89518067"/>
<dbReference type="KEGG" id="sek:SSPA2999"/>
<dbReference type="HOGENOM" id="CLU_082184_2_2_6"/>
<dbReference type="Proteomes" id="UP000001869">
    <property type="component" value="Chromosome"/>
</dbReference>
<dbReference type="GO" id="GO:0022625">
    <property type="term" value="C:cytosolic large ribosomal subunit"/>
    <property type="evidence" value="ECO:0007669"/>
    <property type="project" value="TreeGrafter"/>
</dbReference>
<dbReference type="GO" id="GO:0003729">
    <property type="term" value="F:mRNA binding"/>
    <property type="evidence" value="ECO:0007669"/>
    <property type="project" value="TreeGrafter"/>
</dbReference>
<dbReference type="GO" id="GO:0003735">
    <property type="term" value="F:structural constituent of ribosome"/>
    <property type="evidence" value="ECO:0007669"/>
    <property type="project" value="InterPro"/>
</dbReference>
<dbReference type="GO" id="GO:0017148">
    <property type="term" value="P:negative regulation of translation"/>
    <property type="evidence" value="ECO:0007669"/>
    <property type="project" value="TreeGrafter"/>
</dbReference>
<dbReference type="GO" id="GO:0006412">
    <property type="term" value="P:translation"/>
    <property type="evidence" value="ECO:0007669"/>
    <property type="project" value="UniProtKB-UniRule"/>
</dbReference>
<dbReference type="CDD" id="cd00392">
    <property type="entry name" value="Ribosomal_L13"/>
    <property type="match status" value="1"/>
</dbReference>
<dbReference type="FunFam" id="3.90.1180.10:FF:000001">
    <property type="entry name" value="50S ribosomal protein L13"/>
    <property type="match status" value="1"/>
</dbReference>
<dbReference type="Gene3D" id="3.90.1180.10">
    <property type="entry name" value="Ribosomal protein L13"/>
    <property type="match status" value="1"/>
</dbReference>
<dbReference type="HAMAP" id="MF_01366">
    <property type="entry name" value="Ribosomal_uL13"/>
    <property type="match status" value="1"/>
</dbReference>
<dbReference type="InterPro" id="IPR005822">
    <property type="entry name" value="Ribosomal_uL13"/>
</dbReference>
<dbReference type="InterPro" id="IPR005823">
    <property type="entry name" value="Ribosomal_uL13_bac-type"/>
</dbReference>
<dbReference type="InterPro" id="IPR023563">
    <property type="entry name" value="Ribosomal_uL13_CS"/>
</dbReference>
<dbReference type="InterPro" id="IPR036899">
    <property type="entry name" value="Ribosomal_uL13_sf"/>
</dbReference>
<dbReference type="NCBIfam" id="TIGR01066">
    <property type="entry name" value="rplM_bact"/>
    <property type="match status" value="1"/>
</dbReference>
<dbReference type="PANTHER" id="PTHR11545:SF2">
    <property type="entry name" value="LARGE RIBOSOMAL SUBUNIT PROTEIN UL13M"/>
    <property type="match status" value="1"/>
</dbReference>
<dbReference type="PANTHER" id="PTHR11545">
    <property type="entry name" value="RIBOSOMAL PROTEIN L13"/>
    <property type="match status" value="1"/>
</dbReference>
<dbReference type="Pfam" id="PF00572">
    <property type="entry name" value="Ribosomal_L13"/>
    <property type="match status" value="1"/>
</dbReference>
<dbReference type="PIRSF" id="PIRSF002181">
    <property type="entry name" value="Ribosomal_L13"/>
    <property type="match status" value="1"/>
</dbReference>
<dbReference type="SUPFAM" id="SSF52161">
    <property type="entry name" value="Ribosomal protein L13"/>
    <property type="match status" value="1"/>
</dbReference>
<dbReference type="PROSITE" id="PS00783">
    <property type="entry name" value="RIBOSOMAL_L13"/>
    <property type="match status" value="1"/>
</dbReference>
<gene>
    <name evidence="1" type="primary">rplM</name>
    <name type="ordered locus">SSPA2999</name>
</gene>
<protein>
    <recommendedName>
        <fullName evidence="1">Large ribosomal subunit protein uL13</fullName>
    </recommendedName>
    <alternativeName>
        <fullName evidence="2">50S ribosomal protein L13</fullName>
    </alternativeName>
</protein>
<reference key="1">
    <citation type="journal article" date="2009" name="BMC Genomics">
        <title>Pseudogene accumulation in the evolutionary histories of Salmonella enterica serovars Paratyphi A and Typhi.</title>
        <authorList>
            <person name="Holt K.E."/>
            <person name="Thomson N.R."/>
            <person name="Wain J."/>
            <person name="Langridge G.C."/>
            <person name="Hasan R."/>
            <person name="Bhutta Z.A."/>
            <person name="Quail M.A."/>
            <person name="Norbertczak H."/>
            <person name="Walker D."/>
            <person name="Simmonds M."/>
            <person name="White B."/>
            <person name="Bason N."/>
            <person name="Mungall K."/>
            <person name="Dougan G."/>
            <person name="Parkhill J."/>
        </authorList>
    </citation>
    <scope>NUCLEOTIDE SEQUENCE [LARGE SCALE GENOMIC DNA]</scope>
    <source>
        <strain>AKU_12601</strain>
    </source>
</reference>
<keyword id="KW-0687">Ribonucleoprotein</keyword>
<keyword id="KW-0689">Ribosomal protein</keyword>
<proteinExistence type="inferred from homology"/>
<evidence type="ECO:0000255" key="1">
    <source>
        <dbReference type="HAMAP-Rule" id="MF_01366"/>
    </source>
</evidence>
<evidence type="ECO:0000305" key="2"/>
<feature type="chain" id="PRO_1000144179" description="Large ribosomal subunit protein uL13">
    <location>
        <begin position="1"/>
        <end position="142"/>
    </location>
</feature>
<sequence>MKTFTAKPETVKRDWYVVDATGKTLGRLATELARRLRGKHKAEYTPHVDTGDYIIVLNADKVAVTGNKRTDKVYYHHTGHIGGIKQATFEEMIARRPERVIEIAVKGMLPKGPLGRAMFRKLKVYAGNEHNHAAQQPQVLDI</sequence>
<organism>
    <name type="scientific">Salmonella paratyphi A (strain AKU_12601)</name>
    <dbReference type="NCBI Taxonomy" id="554290"/>
    <lineage>
        <taxon>Bacteria</taxon>
        <taxon>Pseudomonadati</taxon>
        <taxon>Pseudomonadota</taxon>
        <taxon>Gammaproteobacteria</taxon>
        <taxon>Enterobacterales</taxon>
        <taxon>Enterobacteriaceae</taxon>
        <taxon>Salmonella</taxon>
    </lineage>
</organism>